<comment type="subunit">
    <text evidence="1">Homodimer and heterodimers.</text>
</comment>
<comment type="subcellular location">
    <subcellularLocation>
        <location evidence="1">Cell membrane</location>
        <topology evidence="1">Multi-pass membrane protein</topology>
    </subcellularLocation>
</comment>
<comment type="similarity">
    <text evidence="4">Belongs to the Casparian strip membrane proteins (CASP) family.</text>
</comment>
<keyword id="KW-1003">Cell membrane</keyword>
<keyword id="KW-0472">Membrane</keyword>
<keyword id="KW-1185">Reference proteome</keyword>
<keyword id="KW-0812">Transmembrane</keyword>
<keyword id="KW-1133">Transmembrane helix</keyword>
<reference key="1">
    <citation type="journal article" date="2005" name="BMC Biol.">
        <title>The sequence of rice chromosomes 11 and 12, rich in disease resistance genes and recent gene duplications.</title>
        <authorList>
            <consortium name="The rice chromosomes 11 and 12 sequencing consortia"/>
        </authorList>
    </citation>
    <scope>NUCLEOTIDE SEQUENCE [LARGE SCALE GENOMIC DNA]</scope>
    <source>
        <strain>cv. Nipponbare</strain>
    </source>
</reference>
<reference key="2">
    <citation type="journal article" date="2005" name="Nature">
        <title>The map-based sequence of the rice genome.</title>
        <authorList>
            <consortium name="International rice genome sequencing project (IRGSP)"/>
        </authorList>
    </citation>
    <scope>NUCLEOTIDE SEQUENCE [LARGE SCALE GENOMIC DNA]</scope>
    <source>
        <strain>cv. Nipponbare</strain>
    </source>
</reference>
<reference key="3">
    <citation type="journal article" date="2008" name="Nucleic Acids Res.">
        <title>The rice annotation project database (RAP-DB): 2008 update.</title>
        <authorList>
            <consortium name="The rice annotation project (RAP)"/>
        </authorList>
    </citation>
    <scope>GENOME REANNOTATION</scope>
    <source>
        <strain>cv. Nipponbare</strain>
    </source>
</reference>
<reference key="4">
    <citation type="journal article" date="2013" name="Rice">
        <title>Improvement of the Oryza sativa Nipponbare reference genome using next generation sequence and optical map data.</title>
        <authorList>
            <person name="Kawahara Y."/>
            <person name="de la Bastide M."/>
            <person name="Hamilton J.P."/>
            <person name="Kanamori H."/>
            <person name="McCombie W.R."/>
            <person name="Ouyang S."/>
            <person name="Schwartz D.C."/>
            <person name="Tanaka T."/>
            <person name="Wu J."/>
            <person name="Zhou S."/>
            <person name="Childs K.L."/>
            <person name="Davidson R.M."/>
            <person name="Lin H."/>
            <person name="Quesada-Ocampo L."/>
            <person name="Vaillancourt B."/>
            <person name="Sakai H."/>
            <person name="Lee S.S."/>
            <person name="Kim J."/>
            <person name="Numa H."/>
            <person name="Itoh T."/>
            <person name="Buell C.R."/>
            <person name="Matsumoto T."/>
        </authorList>
    </citation>
    <scope>GENOME REANNOTATION</scope>
    <source>
        <strain>cv. Nipponbare</strain>
    </source>
</reference>
<reference key="5">
    <citation type="journal article" date="2005" name="PLoS Biol.">
        <title>The genomes of Oryza sativa: a history of duplications.</title>
        <authorList>
            <person name="Yu J."/>
            <person name="Wang J."/>
            <person name="Lin W."/>
            <person name="Li S."/>
            <person name="Li H."/>
            <person name="Zhou J."/>
            <person name="Ni P."/>
            <person name="Dong W."/>
            <person name="Hu S."/>
            <person name="Zeng C."/>
            <person name="Zhang J."/>
            <person name="Zhang Y."/>
            <person name="Li R."/>
            <person name="Xu Z."/>
            <person name="Li S."/>
            <person name="Li X."/>
            <person name="Zheng H."/>
            <person name="Cong L."/>
            <person name="Lin L."/>
            <person name="Yin J."/>
            <person name="Geng J."/>
            <person name="Li G."/>
            <person name="Shi J."/>
            <person name="Liu J."/>
            <person name="Lv H."/>
            <person name="Li J."/>
            <person name="Wang J."/>
            <person name="Deng Y."/>
            <person name="Ran L."/>
            <person name="Shi X."/>
            <person name="Wang X."/>
            <person name="Wu Q."/>
            <person name="Li C."/>
            <person name="Ren X."/>
            <person name="Wang J."/>
            <person name="Wang X."/>
            <person name="Li D."/>
            <person name="Liu D."/>
            <person name="Zhang X."/>
            <person name="Ji Z."/>
            <person name="Zhao W."/>
            <person name="Sun Y."/>
            <person name="Zhang Z."/>
            <person name="Bao J."/>
            <person name="Han Y."/>
            <person name="Dong L."/>
            <person name="Ji J."/>
            <person name="Chen P."/>
            <person name="Wu S."/>
            <person name="Liu J."/>
            <person name="Xiao Y."/>
            <person name="Bu D."/>
            <person name="Tan J."/>
            <person name="Yang L."/>
            <person name="Ye C."/>
            <person name="Zhang J."/>
            <person name="Xu J."/>
            <person name="Zhou Y."/>
            <person name="Yu Y."/>
            <person name="Zhang B."/>
            <person name="Zhuang S."/>
            <person name="Wei H."/>
            <person name="Liu B."/>
            <person name="Lei M."/>
            <person name="Yu H."/>
            <person name="Li Y."/>
            <person name="Xu H."/>
            <person name="Wei S."/>
            <person name="He X."/>
            <person name="Fang L."/>
            <person name="Zhang Z."/>
            <person name="Zhang Y."/>
            <person name="Huang X."/>
            <person name="Su Z."/>
            <person name="Tong W."/>
            <person name="Li J."/>
            <person name="Tong Z."/>
            <person name="Li S."/>
            <person name="Ye J."/>
            <person name="Wang L."/>
            <person name="Fang L."/>
            <person name="Lei T."/>
            <person name="Chen C.-S."/>
            <person name="Chen H.-C."/>
            <person name="Xu Z."/>
            <person name="Li H."/>
            <person name="Huang H."/>
            <person name="Zhang F."/>
            <person name="Xu H."/>
            <person name="Li N."/>
            <person name="Zhao C."/>
            <person name="Li S."/>
            <person name="Dong L."/>
            <person name="Huang Y."/>
            <person name="Li L."/>
            <person name="Xi Y."/>
            <person name="Qi Q."/>
            <person name="Li W."/>
            <person name="Zhang B."/>
            <person name="Hu W."/>
            <person name="Zhang Y."/>
            <person name="Tian X."/>
            <person name="Jiao Y."/>
            <person name="Liang X."/>
            <person name="Jin J."/>
            <person name="Gao L."/>
            <person name="Zheng W."/>
            <person name="Hao B."/>
            <person name="Liu S.-M."/>
            <person name="Wang W."/>
            <person name="Yuan L."/>
            <person name="Cao M."/>
            <person name="McDermott J."/>
            <person name="Samudrala R."/>
            <person name="Wang J."/>
            <person name="Wong G.K.-S."/>
            <person name="Yang H."/>
        </authorList>
    </citation>
    <scope>NUCLEOTIDE SEQUENCE [LARGE SCALE GENOMIC DNA]</scope>
    <source>
        <strain>cv. Nipponbare</strain>
    </source>
</reference>
<reference key="6">
    <citation type="journal article" date="2003" name="Science">
        <title>Collection, mapping, and annotation of over 28,000 cDNA clones from japonica rice.</title>
        <authorList>
            <consortium name="The rice full-length cDNA consortium"/>
        </authorList>
    </citation>
    <scope>NUCLEOTIDE SEQUENCE [LARGE SCALE MRNA]</scope>
    <source>
        <strain>cv. Nipponbare</strain>
    </source>
</reference>
<reference key="7">
    <citation type="journal article" date="2014" name="Plant Physiol.">
        <title>Functional and evolutionary analysis of the CASPARIAN STRIP MEMBRANE DOMAIN PROTEIN family.</title>
        <authorList>
            <person name="Roppolo D."/>
            <person name="Boeckmann B."/>
            <person name="Pfister A."/>
            <person name="Boutet E."/>
            <person name="Rubio M.C."/>
            <person name="Denervaud-Tendon V."/>
            <person name="Vermeer J.E."/>
            <person name="Gheyselinck J."/>
            <person name="Xenarios I."/>
            <person name="Geldner N."/>
        </authorList>
    </citation>
    <scope>GENE FAMILY</scope>
    <scope>NOMENCLATURE</scope>
</reference>
<proteinExistence type="evidence at transcript level"/>
<dbReference type="EMBL" id="DP000010">
    <property type="protein sequence ID" value="ABA94999.1"/>
    <property type="molecule type" value="Genomic_DNA"/>
</dbReference>
<dbReference type="EMBL" id="AP008217">
    <property type="protein sequence ID" value="BAF28740.1"/>
    <property type="molecule type" value="Genomic_DNA"/>
</dbReference>
<dbReference type="EMBL" id="AP014967">
    <property type="protein sequence ID" value="BAT15072.1"/>
    <property type="molecule type" value="Genomic_DNA"/>
</dbReference>
<dbReference type="EMBL" id="CM000138">
    <property type="protein sequence ID" value="EAZ11769.1"/>
    <property type="molecule type" value="Genomic_DNA"/>
</dbReference>
<dbReference type="EMBL" id="AK060103">
    <property type="status" value="NOT_ANNOTATED_CDS"/>
    <property type="molecule type" value="mRNA"/>
</dbReference>
<dbReference type="RefSeq" id="XP_015615547.1">
    <property type="nucleotide sequence ID" value="XM_015760061.1"/>
</dbReference>
<dbReference type="FunCoup" id="Q2R0D2">
    <property type="interactions" value="764"/>
</dbReference>
<dbReference type="PaxDb" id="39947-Q2R0D2"/>
<dbReference type="EnsemblPlants" id="Os11t0649600-01">
    <property type="protein sequence ID" value="Os11t0649600-01"/>
    <property type="gene ID" value="Os11g0649600"/>
</dbReference>
<dbReference type="Gramene" id="Os11t0649600-01">
    <property type="protein sequence ID" value="Os11t0649600-01"/>
    <property type="gene ID" value="Os11g0649600"/>
</dbReference>
<dbReference type="KEGG" id="dosa:Os11g0649600"/>
<dbReference type="eggNOG" id="ENOG502R5WE">
    <property type="taxonomic scope" value="Eukaryota"/>
</dbReference>
<dbReference type="HOGENOM" id="CLU_117400_0_0_1"/>
<dbReference type="InParanoid" id="Q2R0D2"/>
<dbReference type="OMA" id="CSQVHIA"/>
<dbReference type="OrthoDB" id="690767at2759"/>
<dbReference type="Proteomes" id="UP000000763">
    <property type="component" value="Chromosome 11"/>
</dbReference>
<dbReference type="Proteomes" id="UP000007752">
    <property type="component" value="Chromosome 1"/>
</dbReference>
<dbReference type="Proteomes" id="UP000059680">
    <property type="component" value="Chromosome 11"/>
</dbReference>
<dbReference type="GO" id="GO:0005886">
    <property type="term" value="C:plasma membrane"/>
    <property type="evidence" value="ECO:0007669"/>
    <property type="project" value="UniProtKB-SubCell"/>
</dbReference>
<dbReference type="InterPro" id="IPR006459">
    <property type="entry name" value="CASP/CASPL"/>
</dbReference>
<dbReference type="InterPro" id="IPR006702">
    <property type="entry name" value="CASP_dom"/>
</dbReference>
<dbReference type="InterPro" id="IPR044173">
    <property type="entry name" value="CASPL"/>
</dbReference>
<dbReference type="NCBIfam" id="TIGR01569">
    <property type="entry name" value="A_tha_TIGR01569"/>
    <property type="match status" value="1"/>
</dbReference>
<dbReference type="PANTHER" id="PTHR36488">
    <property type="entry name" value="CASP-LIKE PROTEIN 1U1"/>
    <property type="match status" value="1"/>
</dbReference>
<dbReference type="PANTHER" id="PTHR36488:SF7">
    <property type="entry name" value="CASP-LIKE PROTEIN 1U3"/>
    <property type="match status" value="1"/>
</dbReference>
<dbReference type="Pfam" id="PF04535">
    <property type="entry name" value="CASP_dom"/>
    <property type="match status" value="1"/>
</dbReference>
<feature type="chain" id="PRO_0000391586" description="CASP-like protein 1U3">
    <location>
        <begin position="1"/>
        <end position="204"/>
    </location>
</feature>
<feature type="topological domain" description="Cytoplasmic" evidence="2">
    <location>
        <begin position="1"/>
        <end position="19"/>
    </location>
</feature>
<feature type="transmembrane region" description="Helical" evidence="2">
    <location>
        <begin position="20"/>
        <end position="40"/>
    </location>
</feature>
<feature type="topological domain" description="Extracellular" evidence="2">
    <location>
        <begin position="41"/>
        <end position="63"/>
    </location>
</feature>
<feature type="transmembrane region" description="Helical" evidence="2">
    <location>
        <begin position="64"/>
        <end position="84"/>
    </location>
</feature>
<feature type="topological domain" description="Cytoplasmic" evidence="2">
    <location>
        <begin position="85"/>
        <end position="97"/>
    </location>
</feature>
<feature type="transmembrane region" description="Helical" evidence="2">
    <location>
        <begin position="98"/>
        <end position="118"/>
    </location>
</feature>
<feature type="topological domain" description="Extracellular" evidence="2">
    <location>
        <begin position="119"/>
        <end position="146"/>
    </location>
</feature>
<feature type="transmembrane region" description="Helical" evidence="2">
    <location>
        <begin position="147"/>
        <end position="167"/>
    </location>
</feature>
<feature type="topological domain" description="Cytoplasmic" evidence="2">
    <location>
        <begin position="168"/>
        <end position="204"/>
    </location>
</feature>
<feature type="region of interest" description="Disordered" evidence="3">
    <location>
        <begin position="173"/>
        <end position="204"/>
    </location>
</feature>
<feature type="sequence conflict" description="In Ref. 5; EAZ11769." evidence="4" ref="5">
    <original>NFC</original>
    <variation>KFW</variation>
    <location>
        <begin position="142"/>
        <end position="144"/>
    </location>
</feature>
<feature type="sequence conflict" description="In Ref. 5; EAZ11769." evidence="4" ref="5">
    <original>L</original>
    <variation>V</variation>
    <location>
        <position position="162"/>
    </location>
</feature>
<feature type="sequence conflict" description="In Ref. 6; AK060103." evidence="4" ref="6">
    <original>V</original>
    <variation>I</variation>
    <location>
        <position position="163"/>
    </location>
</feature>
<protein>
    <recommendedName>
        <fullName>CASP-like protein 1U3</fullName>
        <shortName>OsCASPL1U3</shortName>
    </recommendedName>
</protein>
<evidence type="ECO:0000250" key="1"/>
<evidence type="ECO:0000255" key="2"/>
<evidence type="ECO:0000256" key="3">
    <source>
        <dbReference type="SAM" id="MobiDB-lite"/>
    </source>
</evidence>
<evidence type="ECO:0000305" key="4"/>
<organism>
    <name type="scientific">Oryza sativa subsp. japonica</name>
    <name type="common">Rice</name>
    <dbReference type="NCBI Taxonomy" id="39947"/>
    <lineage>
        <taxon>Eukaryota</taxon>
        <taxon>Viridiplantae</taxon>
        <taxon>Streptophyta</taxon>
        <taxon>Embryophyta</taxon>
        <taxon>Tracheophyta</taxon>
        <taxon>Spermatophyta</taxon>
        <taxon>Magnoliopsida</taxon>
        <taxon>Liliopsida</taxon>
        <taxon>Poales</taxon>
        <taxon>Poaceae</taxon>
        <taxon>BOP clade</taxon>
        <taxon>Oryzoideae</taxon>
        <taxon>Oryzeae</taxon>
        <taxon>Oryzinae</taxon>
        <taxon>Oryza</taxon>
        <taxon>Oryza sativa</taxon>
    </lineage>
</organism>
<accession>Q2R0D2</accession>
<accession>A0A0P0Y5L1</accession>
<accession>A2ZSS2</accession>
<sequence>MCEGEKKKDSSSGALYCVNLALRIVVLGLAVAAAALMATASQCTIFLYYGGPLHTITYKDFGPFVYLVVASSIGAFMEAIAIFLTICKKKDGTPAKVLLPLLDAAVPVLLYSATAAAFAAGDMSYCAVGKRVGVCTTAAAGNFCNQVHIAMYVSLAAGVALLVAEIVKHWPDSGKKKEGGGGGCGSDSDSDKSTPCHHGCHSKH</sequence>
<gene>
    <name type="ordered locus">Os11g0649600</name>
    <name type="ordered locus">LOC_Os11g42960</name>
    <name type="ORF">OsJ_01638</name>
</gene>
<name>CSPLF_ORYSJ</name>